<comment type="function">
    <text evidence="1">Catalyzes the ATP-dependent conversion of 7-carboxy-7-deazaguanine (CDG) to 7-cyano-7-deazaguanine (preQ(0)).</text>
</comment>
<comment type="catalytic activity">
    <reaction evidence="1">
        <text>7-carboxy-7-deazaguanine + NH4(+) + ATP = 7-cyano-7-deazaguanine + ADP + phosphate + H2O + H(+)</text>
        <dbReference type="Rhea" id="RHEA:27982"/>
        <dbReference type="ChEBI" id="CHEBI:15377"/>
        <dbReference type="ChEBI" id="CHEBI:15378"/>
        <dbReference type="ChEBI" id="CHEBI:28938"/>
        <dbReference type="ChEBI" id="CHEBI:30616"/>
        <dbReference type="ChEBI" id="CHEBI:43474"/>
        <dbReference type="ChEBI" id="CHEBI:45075"/>
        <dbReference type="ChEBI" id="CHEBI:61036"/>
        <dbReference type="ChEBI" id="CHEBI:456216"/>
        <dbReference type="EC" id="6.3.4.20"/>
    </reaction>
</comment>
<comment type="cofactor">
    <cofactor evidence="1">
        <name>Zn(2+)</name>
        <dbReference type="ChEBI" id="CHEBI:29105"/>
    </cofactor>
    <text evidence="1">Binds 1 zinc ion per subunit.</text>
</comment>
<comment type="pathway">
    <text evidence="1">Purine metabolism; 7-cyano-7-deazaguanine biosynthesis.</text>
</comment>
<comment type="similarity">
    <text evidence="1">Belongs to the QueC family.</text>
</comment>
<organism>
    <name type="scientific">Trichodesmium erythraeum (strain IMS101)</name>
    <dbReference type="NCBI Taxonomy" id="203124"/>
    <lineage>
        <taxon>Bacteria</taxon>
        <taxon>Bacillati</taxon>
        <taxon>Cyanobacteriota</taxon>
        <taxon>Cyanophyceae</taxon>
        <taxon>Oscillatoriophycideae</taxon>
        <taxon>Oscillatoriales</taxon>
        <taxon>Microcoleaceae</taxon>
        <taxon>Trichodesmium</taxon>
    </lineage>
</organism>
<dbReference type="EC" id="6.3.4.20" evidence="1"/>
<dbReference type="EMBL" id="CP000393">
    <property type="protein sequence ID" value="ABG51133.1"/>
    <property type="molecule type" value="Genomic_DNA"/>
</dbReference>
<dbReference type="RefSeq" id="WP_011611506.1">
    <property type="nucleotide sequence ID" value="NC_008312.1"/>
</dbReference>
<dbReference type="SMR" id="Q114E1"/>
<dbReference type="STRING" id="203124.Tery_1877"/>
<dbReference type="KEGG" id="ter:Tery_1877"/>
<dbReference type="eggNOG" id="COG0603">
    <property type="taxonomic scope" value="Bacteria"/>
</dbReference>
<dbReference type="HOGENOM" id="CLU_081854_1_0_3"/>
<dbReference type="OrthoDB" id="9789567at2"/>
<dbReference type="UniPathway" id="UPA00391"/>
<dbReference type="GO" id="GO:0005524">
    <property type="term" value="F:ATP binding"/>
    <property type="evidence" value="ECO:0007669"/>
    <property type="project" value="UniProtKB-UniRule"/>
</dbReference>
<dbReference type="GO" id="GO:0016879">
    <property type="term" value="F:ligase activity, forming carbon-nitrogen bonds"/>
    <property type="evidence" value="ECO:0007669"/>
    <property type="project" value="UniProtKB-UniRule"/>
</dbReference>
<dbReference type="GO" id="GO:0008270">
    <property type="term" value="F:zinc ion binding"/>
    <property type="evidence" value="ECO:0007669"/>
    <property type="project" value="UniProtKB-UniRule"/>
</dbReference>
<dbReference type="GO" id="GO:0008616">
    <property type="term" value="P:queuosine biosynthetic process"/>
    <property type="evidence" value="ECO:0007669"/>
    <property type="project" value="UniProtKB-UniRule"/>
</dbReference>
<dbReference type="CDD" id="cd01995">
    <property type="entry name" value="QueC-like"/>
    <property type="match status" value="1"/>
</dbReference>
<dbReference type="Gene3D" id="3.40.50.620">
    <property type="entry name" value="HUPs"/>
    <property type="match status" value="1"/>
</dbReference>
<dbReference type="HAMAP" id="MF_01633">
    <property type="entry name" value="QueC"/>
    <property type="match status" value="1"/>
</dbReference>
<dbReference type="InterPro" id="IPR018317">
    <property type="entry name" value="QueC"/>
</dbReference>
<dbReference type="InterPro" id="IPR014729">
    <property type="entry name" value="Rossmann-like_a/b/a_fold"/>
</dbReference>
<dbReference type="NCBIfam" id="TIGR00364">
    <property type="entry name" value="7-cyano-7-deazaguanine synthase QueC"/>
    <property type="match status" value="1"/>
</dbReference>
<dbReference type="PANTHER" id="PTHR42914">
    <property type="entry name" value="7-CYANO-7-DEAZAGUANINE SYNTHASE"/>
    <property type="match status" value="1"/>
</dbReference>
<dbReference type="PANTHER" id="PTHR42914:SF1">
    <property type="entry name" value="7-CYANO-7-DEAZAGUANINE SYNTHASE"/>
    <property type="match status" value="1"/>
</dbReference>
<dbReference type="Pfam" id="PF06508">
    <property type="entry name" value="QueC"/>
    <property type="match status" value="1"/>
</dbReference>
<dbReference type="PIRSF" id="PIRSF006293">
    <property type="entry name" value="ExsB"/>
    <property type="match status" value="1"/>
</dbReference>
<dbReference type="SUPFAM" id="SSF52402">
    <property type="entry name" value="Adenine nucleotide alpha hydrolases-like"/>
    <property type="match status" value="1"/>
</dbReference>
<evidence type="ECO:0000255" key="1">
    <source>
        <dbReference type="HAMAP-Rule" id="MF_01633"/>
    </source>
</evidence>
<protein>
    <recommendedName>
        <fullName evidence="1">7-cyano-7-deazaguanine synthase</fullName>
        <ecNumber evidence="1">6.3.4.20</ecNumber>
    </recommendedName>
    <alternativeName>
        <fullName evidence="1">7-cyano-7-carbaguanine synthase</fullName>
    </alternativeName>
    <alternativeName>
        <fullName evidence="1">PreQ(0) synthase</fullName>
    </alternativeName>
    <alternativeName>
        <fullName evidence="1">Queuosine biosynthesis protein QueC</fullName>
    </alternativeName>
</protein>
<accession>Q114E1</accession>
<keyword id="KW-0067">ATP-binding</keyword>
<keyword id="KW-0436">Ligase</keyword>
<keyword id="KW-0479">Metal-binding</keyword>
<keyword id="KW-0547">Nucleotide-binding</keyword>
<keyword id="KW-0671">Queuosine biosynthesis</keyword>
<keyword id="KW-0862">Zinc</keyword>
<gene>
    <name evidence="1" type="primary">queC</name>
    <name type="ordered locus">Tery_1877</name>
</gene>
<proteinExistence type="inferred from homology"/>
<name>QUEC_TRIEI</name>
<reference key="1">
    <citation type="journal article" date="2015" name="Proc. Natl. Acad. Sci. U.S.A.">
        <title>Trichodesmium genome maintains abundant, widespread noncoding DNA in situ, despite oligotrophic lifestyle.</title>
        <authorList>
            <person name="Walworth N."/>
            <person name="Pfreundt U."/>
            <person name="Nelson W.C."/>
            <person name="Mincer T."/>
            <person name="Heidelberg J.F."/>
            <person name="Fu F."/>
            <person name="Waterbury J.B."/>
            <person name="Glavina del Rio T."/>
            <person name="Goodwin L."/>
            <person name="Kyrpides N.C."/>
            <person name="Land M.L."/>
            <person name="Woyke T."/>
            <person name="Hutchins D.A."/>
            <person name="Hess W.R."/>
            <person name="Webb E.A."/>
        </authorList>
    </citation>
    <scope>NUCLEOTIDE SEQUENCE [LARGE SCALE GENOMIC DNA]</scope>
    <source>
        <strain>IMS101</strain>
    </source>
</reference>
<sequence>MKAVILLSGGLDSSTVLYQAKADGCECYAISFDYQQRHLRELDSAKKIADTVGVIEHHIVSFDLRSWGGSALTDSQIDLPSDRDLEEMSQNIPITYVPARNTIFLSFALAYAEVVNASRVYIGVNALDYSGYPDCRPDYILAMQEVFRLGTRQGREGEAIAIVAPLIEMKKTEIIQLGNSLGVPWEKTWSCYAGGEKPCGICDSCKLRLTAFQELGLTDPLM</sequence>
<feature type="chain" id="PRO_0000336963" description="7-cyano-7-deazaguanine synthase">
    <location>
        <begin position="1"/>
        <end position="222"/>
    </location>
</feature>
<feature type="binding site" evidence="1">
    <location>
        <begin position="7"/>
        <end position="17"/>
    </location>
    <ligand>
        <name>ATP</name>
        <dbReference type="ChEBI" id="CHEBI:30616"/>
    </ligand>
</feature>
<feature type="binding site" evidence="1">
    <location>
        <position position="191"/>
    </location>
    <ligand>
        <name>Zn(2+)</name>
        <dbReference type="ChEBI" id="CHEBI:29105"/>
    </ligand>
</feature>
<feature type="binding site" evidence="1">
    <location>
        <position position="199"/>
    </location>
    <ligand>
        <name>Zn(2+)</name>
        <dbReference type="ChEBI" id="CHEBI:29105"/>
    </ligand>
</feature>
<feature type="binding site" evidence="1">
    <location>
        <position position="202"/>
    </location>
    <ligand>
        <name>Zn(2+)</name>
        <dbReference type="ChEBI" id="CHEBI:29105"/>
    </ligand>
</feature>
<feature type="binding site" evidence="1">
    <location>
        <position position="205"/>
    </location>
    <ligand>
        <name>Zn(2+)</name>
        <dbReference type="ChEBI" id="CHEBI:29105"/>
    </ligand>
</feature>